<name>MSRQ_PSEAB</name>
<accession>Q02FY2</accession>
<evidence type="ECO:0000255" key="1">
    <source>
        <dbReference type="HAMAP-Rule" id="MF_01207"/>
    </source>
</evidence>
<dbReference type="EMBL" id="CP000438">
    <property type="protein sequence ID" value="ABJ14073.1"/>
    <property type="molecule type" value="Genomic_DNA"/>
</dbReference>
<dbReference type="RefSeq" id="WP_003141653.1">
    <property type="nucleotide sequence ID" value="NZ_CP034244.1"/>
</dbReference>
<dbReference type="SMR" id="Q02FY2"/>
<dbReference type="KEGG" id="pau:PA14_62100"/>
<dbReference type="PseudoCAP" id="PA14_62100"/>
<dbReference type="HOGENOM" id="CLU_080662_0_1_6"/>
<dbReference type="BioCyc" id="PAER208963:G1G74-5252-MONOMER"/>
<dbReference type="Proteomes" id="UP000000653">
    <property type="component" value="Chromosome"/>
</dbReference>
<dbReference type="GO" id="GO:0005886">
    <property type="term" value="C:plasma membrane"/>
    <property type="evidence" value="ECO:0007669"/>
    <property type="project" value="UniProtKB-SubCell"/>
</dbReference>
<dbReference type="GO" id="GO:0009055">
    <property type="term" value="F:electron transfer activity"/>
    <property type="evidence" value="ECO:0007669"/>
    <property type="project" value="UniProtKB-UniRule"/>
</dbReference>
<dbReference type="GO" id="GO:0010181">
    <property type="term" value="F:FMN binding"/>
    <property type="evidence" value="ECO:0007669"/>
    <property type="project" value="UniProtKB-UniRule"/>
</dbReference>
<dbReference type="GO" id="GO:0020037">
    <property type="term" value="F:heme binding"/>
    <property type="evidence" value="ECO:0007669"/>
    <property type="project" value="UniProtKB-UniRule"/>
</dbReference>
<dbReference type="GO" id="GO:0046872">
    <property type="term" value="F:metal ion binding"/>
    <property type="evidence" value="ECO:0007669"/>
    <property type="project" value="UniProtKB-KW"/>
</dbReference>
<dbReference type="GO" id="GO:0016679">
    <property type="term" value="F:oxidoreductase activity, acting on diphenols and related substances as donors"/>
    <property type="evidence" value="ECO:0007669"/>
    <property type="project" value="TreeGrafter"/>
</dbReference>
<dbReference type="GO" id="GO:0030091">
    <property type="term" value="P:protein repair"/>
    <property type="evidence" value="ECO:0007669"/>
    <property type="project" value="UniProtKB-UniRule"/>
</dbReference>
<dbReference type="HAMAP" id="MF_01207">
    <property type="entry name" value="MsrQ"/>
    <property type="match status" value="1"/>
</dbReference>
<dbReference type="InterPro" id="IPR013130">
    <property type="entry name" value="Fe3_Rdtase_TM_dom"/>
</dbReference>
<dbReference type="InterPro" id="IPR022837">
    <property type="entry name" value="MsrQ-like"/>
</dbReference>
<dbReference type="NCBIfam" id="NF003831">
    <property type="entry name" value="PRK05419.1-2"/>
    <property type="match status" value="1"/>
</dbReference>
<dbReference type="PANTHER" id="PTHR36964">
    <property type="entry name" value="PROTEIN-METHIONINE-SULFOXIDE REDUCTASE HEME-BINDING SUBUNIT MSRQ"/>
    <property type="match status" value="1"/>
</dbReference>
<dbReference type="PANTHER" id="PTHR36964:SF1">
    <property type="entry name" value="PROTEIN-METHIONINE-SULFOXIDE REDUCTASE HEME-BINDING SUBUNIT MSRQ"/>
    <property type="match status" value="1"/>
</dbReference>
<dbReference type="Pfam" id="PF01794">
    <property type="entry name" value="Ferric_reduct"/>
    <property type="match status" value="1"/>
</dbReference>
<sequence length="202" mass="23075">MRYWYLRLAVFLGALAVPAWWLYQAWIFALGPDPGKTLVDRLGLGALVLLLLTLAMTPLQKLSGWPGWIAVRRQLGLWCFTYVLLHLSAYCVFILGLDWGQLGIELSKRPYIIVGMLGFVCLFLLAITSNRFAMRKLGSRWKKLHRLVYLILGLGLLHMLWVVRADLEEWTLYAVVGASLMLLRLPSIARRLPRLRTRPGVS</sequence>
<gene>
    <name evidence="1" type="primary">msrQ</name>
    <name type="ordered locus">PA14_62100</name>
</gene>
<proteinExistence type="inferred from homology"/>
<feature type="chain" id="PRO_1000066181" description="Protein-methionine-sulfoxide reductase heme-binding subunit MsrQ">
    <location>
        <begin position="1"/>
        <end position="202"/>
    </location>
</feature>
<feature type="transmembrane region" description="Helical" evidence="1">
    <location>
        <begin position="8"/>
        <end position="28"/>
    </location>
</feature>
<feature type="transmembrane region" description="Helical" evidence="1">
    <location>
        <begin position="42"/>
        <end position="62"/>
    </location>
</feature>
<feature type="transmembrane region" description="Helical" evidence="1">
    <location>
        <begin position="75"/>
        <end position="95"/>
    </location>
</feature>
<feature type="transmembrane region" description="Helical" evidence="1">
    <location>
        <begin position="110"/>
        <end position="130"/>
    </location>
</feature>
<feature type="transmembrane region" description="Helical" evidence="1">
    <location>
        <begin position="147"/>
        <end position="167"/>
    </location>
</feature>
<feature type="transmembrane region" description="Helical" evidence="1">
    <location>
        <begin position="169"/>
        <end position="189"/>
    </location>
</feature>
<comment type="function">
    <text evidence="1">Part of the MsrPQ system that repairs oxidized periplasmic proteins containing methionine sulfoxide residues (Met-O), using respiratory chain electrons. Thus protects these proteins from oxidative-stress damage caused by reactive species of oxygen and chlorine generated by the host defense mechanisms. MsrPQ is essential for the maintenance of envelope integrity under bleach stress, rescuing a wide series of structurally unrelated periplasmic proteins from methionine oxidation. MsrQ provides electrons for reduction to the reductase catalytic subunit MsrP, using the quinone pool of the respiratory chain.</text>
</comment>
<comment type="cofactor">
    <cofactor evidence="1">
        <name>FMN</name>
        <dbReference type="ChEBI" id="CHEBI:58210"/>
    </cofactor>
    <text evidence="1">Binds 1 FMN per subunit.</text>
</comment>
<comment type="cofactor">
    <cofactor evidence="1">
        <name>heme b</name>
        <dbReference type="ChEBI" id="CHEBI:60344"/>
    </cofactor>
    <text evidence="1">Binds 1 heme b (iron(II)-protoporphyrin IX) group per subunit.</text>
</comment>
<comment type="subunit">
    <text evidence="1">Heterodimer of a catalytic subunit (MsrP) and a heme-binding subunit (MsrQ).</text>
</comment>
<comment type="subcellular location">
    <subcellularLocation>
        <location evidence="1">Cell inner membrane</location>
        <topology evidence="1">Multi-pass membrane protein</topology>
    </subcellularLocation>
</comment>
<comment type="similarity">
    <text evidence="1">Belongs to the MsrQ family.</text>
</comment>
<reference key="1">
    <citation type="journal article" date="2006" name="Genome Biol.">
        <title>Genomic analysis reveals that Pseudomonas aeruginosa virulence is combinatorial.</title>
        <authorList>
            <person name="Lee D.G."/>
            <person name="Urbach J.M."/>
            <person name="Wu G."/>
            <person name="Liberati N.T."/>
            <person name="Feinbaum R.L."/>
            <person name="Miyata S."/>
            <person name="Diggins L.T."/>
            <person name="He J."/>
            <person name="Saucier M."/>
            <person name="Deziel E."/>
            <person name="Friedman L."/>
            <person name="Li L."/>
            <person name="Grills G."/>
            <person name="Montgomery K."/>
            <person name="Kucherlapati R."/>
            <person name="Rahme L.G."/>
            <person name="Ausubel F.M."/>
        </authorList>
    </citation>
    <scope>NUCLEOTIDE SEQUENCE [LARGE SCALE GENOMIC DNA]</scope>
    <source>
        <strain>UCBPP-PA14</strain>
    </source>
</reference>
<protein>
    <recommendedName>
        <fullName evidence="1">Protein-methionine-sulfoxide reductase heme-binding subunit MsrQ</fullName>
    </recommendedName>
    <alternativeName>
        <fullName evidence="1">Flavocytochrome MsrQ</fullName>
    </alternativeName>
</protein>
<keyword id="KW-0997">Cell inner membrane</keyword>
<keyword id="KW-1003">Cell membrane</keyword>
<keyword id="KW-0249">Electron transport</keyword>
<keyword id="KW-0285">Flavoprotein</keyword>
<keyword id="KW-0288">FMN</keyword>
<keyword id="KW-0349">Heme</keyword>
<keyword id="KW-0408">Iron</keyword>
<keyword id="KW-0472">Membrane</keyword>
<keyword id="KW-0479">Metal-binding</keyword>
<keyword id="KW-0812">Transmembrane</keyword>
<keyword id="KW-1133">Transmembrane helix</keyword>
<keyword id="KW-0813">Transport</keyword>
<organism>
    <name type="scientific">Pseudomonas aeruginosa (strain UCBPP-PA14)</name>
    <dbReference type="NCBI Taxonomy" id="208963"/>
    <lineage>
        <taxon>Bacteria</taxon>
        <taxon>Pseudomonadati</taxon>
        <taxon>Pseudomonadota</taxon>
        <taxon>Gammaproteobacteria</taxon>
        <taxon>Pseudomonadales</taxon>
        <taxon>Pseudomonadaceae</taxon>
        <taxon>Pseudomonas</taxon>
    </lineage>
</organism>